<dbReference type="EMBL" id="AE000657">
    <property type="protein sequence ID" value="AAC06867.1"/>
    <property type="molecule type" value="Genomic_DNA"/>
</dbReference>
<dbReference type="PIR" id="F70359">
    <property type="entry name" value="F70359"/>
</dbReference>
<dbReference type="RefSeq" id="NP_213466.1">
    <property type="nucleotide sequence ID" value="NC_000918.1"/>
</dbReference>
<dbReference type="RefSeq" id="WP_010880404.1">
    <property type="nucleotide sequence ID" value="NC_000918.1"/>
</dbReference>
<dbReference type="SMR" id="O66906"/>
<dbReference type="STRING" id="224324.aq_678"/>
<dbReference type="EnsemblBacteria" id="AAC06867">
    <property type="protein sequence ID" value="AAC06867"/>
    <property type="gene ID" value="aq_678"/>
</dbReference>
<dbReference type="KEGG" id="aae:aq_678"/>
<dbReference type="eggNOG" id="ENOG5032UUK">
    <property type="taxonomic scope" value="Bacteria"/>
</dbReference>
<dbReference type="HOGENOM" id="CLU_1377502_0_0_0"/>
<dbReference type="InParanoid" id="O66906"/>
<dbReference type="OrthoDB" id="9799452at2"/>
<dbReference type="Proteomes" id="UP000000798">
    <property type="component" value="Chromosome"/>
</dbReference>
<dbReference type="Gene3D" id="6.10.250.2200">
    <property type="match status" value="1"/>
</dbReference>
<feature type="chain" id="PRO_0000186875" description="Uncharacterized protein aq_678">
    <location>
        <begin position="1"/>
        <end position="192"/>
    </location>
</feature>
<feature type="coiled-coil region" evidence="1">
    <location>
        <begin position="53"/>
        <end position="111"/>
    </location>
</feature>
<keyword id="KW-0175">Coiled coil</keyword>
<keyword id="KW-1185">Reference proteome</keyword>
<reference key="1">
    <citation type="journal article" date="1998" name="Nature">
        <title>The complete genome of the hyperthermophilic bacterium Aquifex aeolicus.</title>
        <authorList>
            <person name="Deckert G."/>
            <person name="Warren P.V."/>
            <person name="Gaasterland T."/>
            <person name="Young W.G."/>
            <person name="Lenox A.L."/>
            <person name="Graham D.E."/>
            <person name="Overbeek R."/>
            <person name="Snead M.A."/>
            <person name="Keller M."/>
            <person name="Aujay M."/>
            <person name="Huber R."/>
            <person name="Feldman R.A."/>
            <person name="Short J.M."/>
            <person name="Olsen G.J."/>
            <person name="Swanson R.V."/>
        </authorList>
    </citation>
    <scope>NUCLEOTIDE SEQUENCE [LARGE SCALE GENOMIC DNA]</scope>
    <source>
        <strain>VF5</strain>
    </source>
</reference>
<organism>
    <name type="scientific">Aquifex aeolicus (strain VF5)</name>
    <dbReference type="NCBI Taxonomy" id="224324"/>
    <lineage>
        <taxon>Bacteria</taxon>
        <taxon>Pseudomonadati</taxon>
        <taxon>Aquificota</taxon>
        <taxon>Aquificia</taxon>
        <taxon>Aquificales</taxon>
        <taxon>Aquificaceae</taxon>
        <taxon>Aquifex</taxon>
    </lineage>
</organism>
<name>Y678_AQUAE</name>
<proteinExistence type="predicted"/>
<evidence type="ECO:0000255" key="1"/>
<sequence>MLIVLLALLLLSCSPKYKIVKEYVLPQNTLCVQDCKEKFLECKKACFESYNACLKESVERARKVYLSLLKDYERKSREYEKAYENYLKELRTYRETLYRIKEDLKFYERICSAYKDKEACDKKEWLKKRIRFYERRKPLPPQKPTMPSYEILLKREREACSCECGCEKLYDACFESCRGKVRIKKVCVENCD</sequence>
<gene>
    <name type="ordered locus">aq_678</name>
</gene>
<protein>
    <recommendedName>
        <fullName>Uncharacterized protein aq_678</fullName>
    </recommendedName>
</protein>
<accession>O66906</accession>